<gene>
    <name evidence="1" type="primary">tsf</name>
    <name type="ordered locus">Ccur92_03560</name>
    <name type="ORF">CCV52592_1261</name>
</gene>
<organism>
    <name type="scientific">Campylobacter curvus (strain 525.92)</name>
    <dbReference type="NCBI Taxonomy" id="360105"/>
    <lineage>
        <taxon>Bacteria</taxon>
        <taxon>Pseudomonadati</taxon>
        <taxon>Campylobacterota</taxon>
        <taxon>Epsilonproteobacteria</taxon>
        <taxon>Campylobacterales</taxon>
        <taxon>Campylobacteraceae</taxon>
        <taxon>Campylobacter</taxon>
    </lineage>
</organism>
<evidence type="ECO:0000255" key="1">
    <source>
        <dbReference type="HAMAP-Rule" id="MF_00050"/>
    </source>
</evidence>
<protein>
    <recommendedName>
        <fullName evidence="1">Elongation factor Ts</fullName>
        <shortName evidence="1">EF-Ts</shortName>
    </recommendedName>
</protein>
<keyword id="KW-0963">Cytoplasm</keyword>
<keyword id="KW-0251">Elongation factor</keyword>
<keyword id="KW-0648">Protein biosynthesis</keyword>
<keyword id="KW-1185">Reference proteome</keyword>
<dbReference type="EMBL" id="CP000767">
    <property type="protein sequence ID" value="EAU00944.1"/>
    <property type="molecule type" value="Genomic_DNA"/>
</dbReference>
<dbReference type="RefSeq" id="WP_009651037.1">
    <property type="nucleotide sequence ID" value="NC_009715.2"/>
</dbReference>
<dbReference type="SMR" id="A7GWR8"/>
<dbReference type="STRING" id="360105.CCV52592_1261"/>
<dbReference type="KEGG" id="ccv:CCV52592_1261"/>
<dbReference type="HOGENOM" id="CLU_047155_0_1_7"/>
<dbReference type="OrthoDB" id="9808348at2"/>
<dbReference type="Proteomes" id="UP000006380">
    <property type="component" value="Chromosome"/>
</dbReference>
<dbReference type="GO" id="GO:0005737">
    <property type="term" value="C:cytoplasm"/>
    <property type="evidence" value="ECO:0007669"/>
    <property type="project" value="UniProtKB-SubCell"/>
</dbReference>
<dbReference type="GO" id="GO:0003746">
    <property type="term" value="F:translation elongation factor activity"/>
    <property type="evidence" value="ECO:0007669"/>
    <property type="project" value="UniProtKB-UniRule"/>
</dbReference>
<dbReference type="CDD" id="cd14275">
    <property type="entry name" value="UBA_EF-Ts"/>
    <property type="match status" value="1"/>
</dbReference>
<dbReference type="FunFam" id="1.10.286.20:FF:000004">
    <property type="entry name" value="Elongation factor Ts"/>
    <property type="match status" value="1"/>
</dbReference>
<dbReference type="FunFam" id="1.10.8.10:FF:000001">
    <property type="entry name" value="Elongation factor Ts"/>
    <property type="match status" value="1"/>
</dbReference>
<dbReference type="Gene3D" id="1.10.286.20">
    <property type="match status" value="1"/>
</dbReference>
<dbReference type="Gene3D" id="1.10.8.10">
    <property type="entry name" value="DNA helicase RuvA subunit, C-terminal domain"/>
    <property type="match status" value="1"/>
</dbReference>
<dbReference type="Gene3D" id="3.30.479.20">
    <property type="entry name" value="Elongation factor Ts, dimerisation domain"/>
    <property type="match status" value="2"/>
</dbReference>
<dbReference type="HAMAP" id="MF_00050">
    <property type="entry name" value="EF_Ts"/>
    <property type="match status" value="1"/>
</dbReference>
<dbReference type="InterPro" id="IPR036402">
    <property type="entry name" value="EF-Ts_dimer_sf"/>
</dbReference>
<dbReference type="InterPro" id="IPR001816">
    <property type="entry name" value="Transl_elong_EFTs/EF1B"/>
</dbReference>
<dbReference type="InterPro" id="IPR014039">
    <property type="entry name" value="Transl_elong_EFTs/EF1B_dimer"/>
</dbReference>
<dbReference type="InterPro" id="IPR018101">
    <property type="entry name" value="Transl_elong_Ts_CS"/>
</dbReference>
<dbReference type="InterPro" id="IPR009060">
    <property type="entry name" value="UBA-like_sf"/>
</dbReference>
<dbReference type="NCBIfam" id="TIGR00116">
    <property type="entry name" value="tsf"/>
    <property type="match status" value="1"/>
</dbReference>
<dbReference type="PANTHER" id="PTHR11741">
    <property type="entry name" value="ELONGATION FACTOR TS"/>
    <property type="match status" value="1"/>
</dbReference>
<dbReference type="PANTHER" id="PTHR11741:SF0">
    <property type="entry name" value="ELONGATION FACTOR TS, MITOCHONDRIAL"/>
    <property type="match status" value="1"/>
</dbReference>
<dbReference type="Pfam" id="PF00889">
    <property type="entry name" value="EF_TS"/>
    <property type="match status" value="1"/>
</dbReference>
<dbReference type="SUPFAM" id="SSF54713">
    <property type="entry name" value="Elongation factor Ts (EF-Ts), dimerisation domain"/>
    <property type="match status" value="2"/>
</dbReference>
<dbReference type="SUPFAM" id="SSF46934">
    <property type="entry name" value="UBA-like"/>
    <property type="match status" value="1"/>
</dbReference>
<dbReference type="PROSITE" id="PS01126">
    <property type="entry name" value="EF_TS_1"/>
    <property type="match status" value="1"/>
</dbReference>
<dbReference type="PROSITE" id="PS01127">
    <property type="entry name" value="EF_TS_2"/>
    <property type="match status" value="1"/>
</dbReference>
<proteinExistence type="inferred from homology"/>
<feature type="chain" id="PRO_0000323446" description="Elongation factor Ts">
    <location>
        <begin position="1"/>
        <end position="354"/>
    </location>
</feature>
<feature type="region of interest" description="Involved in Mg(2+) ion dislocation from EF-Tu" evidence="1">
    <location>
        <begin position="81"/>
        <end position="84"/>
    </location>
</feature>
<sequence>MEITAQMVKELRESTGAGMMDCKKALSEADGDMQKAVDILREKGLGQAAKKADRLASEGLVSVEVCEHCKRATISEINSETDFVARNPQFQALTKDTTAHIQAKGITSVEELNESTLNGVKFEEYFKTQIATIGENLVVRRFETISADEKGVVNGYVHSNGRVGVLIGAACQSEEVAQKAAEFIRNLCMHAAAMKPTVISYKDLEKDFVEKEFIALKAELEKENEELKRLGKPLHHIPRFASRSQITPEILAGVENEIKEELKAEGKPEKIWDKIIPGKIERFYADNTILDQRLTLLGQFYVMDDKKTIEQVLAEKSKELGGKIEIVKYVRFELGEGLEKKVDDFAAEVAAQIG</sequence>
<reference key="1">
    <citation type="submission" date="2007-07" db="EMBL/GenBank/DDBJ databases">
        <title>Genome sequence of Campylobacter curvus 525.92 isolated from human feces.</title>
        <authorList>
            <person name="Fouts D.E."/>
            <person name="Mongodin E.F."/>
            <person name="Puiu D."/>
            <person name="Sebastian Y."/>
            <person name="Miller W.G."/>
            <person name="Mandrell R.E."/>
            <person name="Lastovica A.J."/>
            <person name="Nelson K.E."/>
        </authorList>
    </citation>
    <scope>NUCLEOTIDE SEQUENCE [LARGE SCALE GENOMIC DNA]</scope>
    <source>
        <strain>525.92</strain>
    </source>
</reference>
<accession>A7GWR8</accession>
<comment type="function">
    <text evidence="1">Associates with the EF-Tu.GDP complex and induces the exchange of GDP to GTP. It remains bound to the aminoacyl-tRNA.EF-Tu.GTP complex up to the GTP hydrolysis stage on the ribosome.</text>
</comment>
<comment type="subcellular location">
    <subcellularLocation>
        <location evidence="1">Cytoplasm</location>
    </subcellularLocation>
</comment>
<comment type="similarity">
    <text evidence="1">Belongs to the EF-Ts family.</text>
</comment>
<name>EFTS_CAMC5</name>